<name>GLMU_DICNV</name>
<keyword id="KW-0012">Acyltransferase</keyword>
<keyword id="KW-0133">Cell shape</keyword>
<keyword id="KW-0961">Cell wall biogenesis/degradation</keyword>
<keyword id="KW-0963">Cytoplasm</keyword>
<keyword id="KW-0460">Magnesium</keyword>
<keyword id="KW-0479">Metal-binding</keyword>
<keyword id="KW-0511">Multifunctional enzyme</keyword>
<keyword id="KW-0548">Nucleotidyltransferase</keyword>
<keyword id="KW-0573">Peptidoglycan synthesis</keyword>
<keyword id="KW-1185">Reference proteome</keyword>
<keyword id="KW-0677">Repeat</keyword>
<keyword id="KW-0808">Transferase</keyword>
<evidence type="ECO:0000255" key="1">
    <source>
        <dbReference type="HAMAP-Rule" id="MF_01631"/>
    </source>
</evidence>
<feature type="chain" id="PRO_1000056154" description="Bifunctional protein GlmU">
    <location>
        <begin position="1"/>
        <end position="466"/>
    </location>
</feature>
<feature type="region of interest" description="Pyrophosphorylase" evidence="1">
    <location>
        <begin position="1"/>
        <end position="233"/>
    </location>
</feature>
<feature type="region of interest" description="Linker" evidence="1">
    <location>
        <begin position="234"/>
        <end position="254"/>
    </location>
</feature>
<feature type="region of interest" description="N-acetyltransferase" evidence="1">
    <location>
        <begin position="255"/>
        <end position="466"/>
    </location>
</feature>
<feature type="active site" description="Proton acceptor" evidence="1">
    <location>
        <position position="367"/>
    </location>
</feature>
<feature type="binding site" evidence="1">
    <location>
        <begin position="11"/>
        <end position="14"/>
    </location>
    <ligand>
        <name>UDP-N-acetyl-alpha-D-glucosamine</name>
        <dbReference type="ChEBI" id="CHEBI:57705"/>
    </ligand>
</feature>
<feature type="binding site" evidence="1">
    <location>
        <position position="25"/>
    </location>
    <ligand>
        <name>UDP-N-acetyl-alpha-D-glucosamine</name>
        <dbReference type="ChEBI" id="CHEBI:57705"/>
    </ligand>
</feature>
<feature type="binding site" evidence="1">
    <location>
        <position position="79"/>
    </location>
    <ligand>
        <name>UDP-N-acetyl-alpha-D-glucosamine</name>
        <dbReference type="ChEBI" id="CHEBI:57705"/>
    </ligand>
</feature>
<feature type="binding site" evidence="1">
    <location>
        <begin position="84"/>
        <end position="85"/>
    </location>
    <ligand>
        <name>UDP-N-acetyl-alpha-D-glucosamine</name>
        <dbReference type="ChEBI" id="CHEBI:57705"/>
    </ligand>
</feature>
<feature type="binding site" evidence="1">
    <location>
        <position position="108"/>
    </location>
    <ligand>
        <name>Mg(2+)</name>
        <dbReference type="ChEBI" id="CHEBI:18420"/>
    </ligand>
</feature>
<feature type="binding site" evidence="1">
    <location>
        <position position="143"/>
    </location>
    <ligand>
        <name>UDP-N-acetyl-alpha-D-glucosamine</name>
        <dbReference type="ChEBI" id="CHEBI:57705"/>
    </ligand>
</feature>
<feature type="binding site" evidence="1">
    <location>
        <position position="158"/>
    </location>
    <ligand>
        <name>UDP-N-acetyl-alpha-D-glucosamine</name>
        <dbReference type="ChEBI" id="CHEBI:57705"/>
    </ligand>
</feature>
<feature type="binding site" evidence="1">
    <location>
        <position position="173"/>
    </location>
    <ligand>
        <name>UDP-N-acetyl-alpha-D-glucosamine</name>
        <dbReference type="ChEBI" id="CHEBI:57705"/>
    </ligand>
</feature>
<feature type="binding site" evidence="1">
    <location>
        <position position="231"/>
    </location>
    <ligand>
        <name>Mg(2+)</name>
        <dbReference type="ChEBI" id="CHEBI:18420"/>
    </ligand>
</feature>
<feature type="binding site" evidence="1">
    <location>
        <position position="231"/>
    </location>
    <ligand>
        <name>UDP-N-acetyl-alpha-D-glucosamine</name>
        <dbReference type="ChEBI" id="CHEBI:57705"/>
    </ligand>
</feature>
<feature type="binding site" evidence="1">
    <location>
        <position position="337"/>
    </location>
    <ligand>
        <name>UDP-N-acetyl-alpha-D-glucosamine</name>
        <dbReference type="ChEBI" id="CHEBI:57705"/>
    </ligand>
</feature>
<feature type="binding site" evidence="1">
    <location>
        <position position="355"/>
    </location>
    <ligand>
        <name>UDP-N-acetyl-alpha-D-glucosamine</name>
        <dbReference type="ChEBI" id="CHEBI:57705"/>
    </ligand>
</feature>
<feature type="binding site" evidence="1">
    <location>
        <position position="370"/>
    </location>
    <ligand>
        <name>UDP-N-acetyl-alpha-D-glucosamine</name>
        <dbReference type="ChEBI" id="CHEBI:57705"/>
    </ligand>
</feature>
<feature type="binding site" evidence="1">
    <location>
        <position position="381"/>
    </location>
    <ligand>
        <name>UDP-N-acetyl-alpha-D-glucosamine</name>
        <dbReference type="ChEBI" id="CHEBI:57705"/>
    </ligand>
</feature>
<feature type="binding site" evidence="1">
    <location>
        <position position="384"/>
    </location>
    <ligand>
        <name>acetyl-CoA</name>
        <dbReference type="ChEBI" id="CHEBI:57288"/>
    </ligand>
</feature>
<feature type="binding site" evidence="1">
    <location>
        <begin position="390"/>
        <end position="391"/>
    </location>
    <ligand>
        <name>acetyl-CoA</name>
        <dbReference type="ChEBI" id="CHEBI:57288"/>
    </ligand>
</feature>
<feature type="binding site" evidence="1">
    <location>
        <position position="409"/>
    </location>
    <ligand>
        <name>acetyl-CoA</name>
        <dbReference type="ChEBI" id="CHEBI:57288"/>
    </ligand>
</feature>
<feature type="binding site" evidence="1">
    <location>
        <position position="427"/>
    </location>
    <ligand>
        <name>acetyl-CoA</name>
        <dbReference type="ChEBI" id="CHEBI:57288"/>
    </ligand>
</feature>
<feature type="binding site" evidence="1">
    <location>
        <position position="444"/>
    </location>
    <ligand>
        <name>acetyl-CoA</name>
        <dbReference type="ChEBI" id="CHEBI:57288"/>
    </ligand>
</feature>
<comment type="function">
    <text evidence="1">Catalyzes the last two sequential reactions in the de novo biosynthetic pathway for UDP-N-acetylglucosamine (UDP-GlcNAc). The C-terminal domain catalyzes the transfer of acetyl group from acetyl coenzyme A to glucosamine-1-phosphate (GlcN-1-P) to produce N-acetylglucosamine-1-phosphate (GlcNAc-1-P), which is converted into UDP-GlcNAc by the transfer of uridine 5-monophosphate (from uridine 5-triphosphate), a reaction catalyzed by the N-terminal domain.</text>
</comment>
<comment type="catalytic activity">
    <reaction evidence="1">
        <text>alpha-D-glucosamine 1-phosphate + acetyl-CoA = N-acetyl-alpha-D-glucosamine 1-phosphate + CoA + H(+)</text>
        <dbReference type="Rhea" id="RHEA:13725"/>
        <dbReference type="ChEBI" id="CHEBI:15378"/>
        <dbReference type="ChEBI" id="CHEBI:57287"/>
        <dbReference type="ChEBI" id="CHEBI:57288"/>
        <dbReference type="ChEBI" id="CHEBI:57776"/>
        <dbReference type="ChEBI" id="CHEBI:58516"/>
        <dbReference type="EC" id="2.3.1.157"/>
    </reaction>
</comment>
<comment type="catalytic activity">
    <reaction evidence="1">
        <text>N-acetyl-alpha-D-glucosamine 1-phosphate + UTP + H(+) = UDP-N-acetyl-alpha-D-glucosamine + diphosphate</text>
        <dbReference type="Rhea" id="RHEA:13509"/>
        <dbReference type="ChEBI" id="CHEBI:15378"/>
        <dbReference type="ChEBI" id="CHEBI:33019"/>
        <dbReference type="ChEBI" id="CHEBI:46398"/>
        <dbReference type="ChEBI" id="CHEBI:57705"/>
        <dbReference type="ChEBI" id="CHEBI:57776"/>
        <dbReference type="EC" id="2.7.7.23"/>
    </reaction>
</comment>
<comment type="cofactor">
    <cofactor evidence="1">
        <name>Mg(2+)</name>
        <dbReference type="ChEBI" id="CHEBI:18420"/>
    </cofactor>
    <text evidence="1">Binds 1 Mg(2+) ion per subunit.</text>
</comment>
<comment type="pathway">
    <text evidence="1">Nucleotide-sugar biosynthesis; UDP-N-acetyl-alpha-D-glucosamine biosynthesis; N-acetyl-alpha-D-glucosamine 1-phosphate from alpha-D-glucosamine 6-phosphate (route II): step 2/2.</text>
</comment>
<comment type="pathway">
    <text evidence="1">Nucleotide-sugar biosynthesis; UDP-N-acetyl-alpha-D-glucosamine biosynthesis; UDP-N-acetyl-alpha-D-glucosamine from N-acetyl-alpha-D-glucosamine 1-phosphate: step 1/1.</text>
</comment>
<comment type="pathway">
    <text evidence="1">Bacterial outer membrane biogenesis; LPS lipid A biosynthesis.</text>
</comment>
<comment type="subunit">
    <text evidence="1">Homotrimer.</text>
</comment>
<comment type="subcellular location">
    <subcellularLocation>
        <location evidence="1">Cytoplasm</location>
    </subcellularLocation>
</comment>
<comment type="similarity">
    <text evidence="1">In the N-terminal section; belongs to the N-acetylglucosamine-1-phosphate uridyltransferase family.</text>
</comment>
<comment type="similarity">
    <text evidence="1">In the C-terminal section; belongs to the transferase hexapeptide repeat family.</text>
</comment>
<dbReference type="EC" id="2.7.7.23" evidence="1"/>
<dbReference type="EC" id="2.3.1.157" evidence="1"/>
<dbReference type="EMBL" id="CP000513">
    <property type="protein sequence ID" value="ABQ13856.1"/>
    <property type="molecule type" value="Genomic_DNA"/>
</dbReference>
<dbReference type="RefSeq" id="WP_012031444.1">
    <property type="nucleotide sequence ID" value="NC_009446.1"/>
</dbReference>
<dbReference type="SMR" id="A5EXL2"/>
<dbReference type="STRING" id="246195.DNO_1140"/>
<dbReference type="KEGG" id="dno:DNO_1140"/>
<dbReference type="eggNOG" id="COG1207">
    <property type="taxonomic scope" value="Bacteria"/>
</dbReference>
<dbReference type="HOGENOM" id="CLU_029499_15_2_6"/>
<dbReference type="OrthoDB" id="9775031at2"/>
<dbReference type="UniPathway" id="UPA00113">
    <property type="reaction ID" value="UER00532"/>
</dbReference>
<dbReference type="UniPathway" id="UPA00113">
    <property type="reaction ID" value="UER00533"/>
</dbReference>
<dbReference type="UniPathway" id="UPA00973"/>
<dbReference type="Proteomes" id="UP000000248">
    <property type="component" value="Chromosome"/>
</dbReference>
<dbReference type="GO" id="GO:0005737">
    <property type="term" value="C:cytoplasm"/>
    <property type="evidence" value="ECO:0007669"/>
    <property type="project" value="UniProtKB-SubCell"/>
</dbReference>
<dbReference type="GO" id="GO:0016020">
    <property type="term" value="C:membrane"/>
    <property type="evidence" value="ECO:0007669"/>
    <property type="project" value="GOC"/>
</dbReference>
<dbReference type="GO" id="GO:0019134">
    <property type="term" value="F:glucosamine-1-phosphate N-acetyltransferase activity"/>
    <property type="evidence" value="ECO:0007669"/>
    <property type="project" value="UniProtKB-UniRule"/>
</dbReference>
<dbReference type="GO" id="GO:0000287">
    <property type="term" value="F:magnesium ion binding"/>
    <property type="evidence" value="ECO:0007669"/>
    <property type="project" value="UniProtKB-UniRule"/>
</dbReference>
<dbReference type="GO" id="GO:0003977">
    <property type="term" value="F:UDP-N-acetylglucosamine diphosphorylase activity"/>
    <property type="evidence" value="ECO:0007669"/>
    <property type="project" value="UniProtKB-UniRule"/>
</dbReference>
<dbReference type="GO" id="GO:0000902">
    <property type="term" value="P:cell morphogenesis"/>
    <property type="evidence" value="ECO:0007669"/>
    <property type="project" value="UniProtKB-UniRule"/>
</dbReference>
<dbReference type="GO" id="GO:0071555">
    <property type="term" value="P:cell wall organization"/>
    <property type="evidence" value="ECO:0007669"/>
    <property type="project" value="UniProtKB-KW"/>
</dbReference>
<dbReference type="GO" id="GO:0009245">
    <property type="term" value="P:lipid A biosynthetic process"/>
    <property type="evidence" value="ECO:0007669"/>
    <property type="project" value="UniProtKB-UniRule"/>
</dbReference>
<dbReference type="GO" id="GO:0009252">
    <property type="term" value="P:peptidoglycan biosynthetic process"/>
    <property type="evidence" value="ECO:0007669"/>
    <property type="project" value="UniProtKB-UniRule"/>
</dbReference>
<dbReference type="GO" id="GO:0008360">
    <property type="term" value="P:regulation of cell shape"/>
    <property type="evidence" value="ECO:0007669"/>
    <property type="project" value="UniProtKB-KW"/>
</dbReference>
<dbReference type="GO" id="GO:0006048">
    <property type="term" value="P:UDP-N-acetylglucosamine biosynthetic process"/>
    <property type="evidence" value="ECO:0007669"/>
    <property type="project" value="UniProtKB-UniPathway"/>
</dbReference>
<dbReference type="CDD" id="cd02540">
    <property type="entry name" value="GT2_GlmU_N_bac"/>
    <property type="match status" value="1"/>
</dbReference>
<dbReference type="CDD" id="cd03353">
    <property type="entry name" value="LbH_GlmU_C"/>
    <property type="match status" value="1"/>
</dbReference>
<dbReference type="Gene3D" id="2.160.10.10">
    <property type="entry name" value="Hexapeptide repeat proteins"/>
    <property type="match status" value="1"/>
</dbReference>
<dbReference type="Gene3D" id="3.90.550.10">
    <property type="entry name" value="Spore Coat Polysaccharide Biosynthesis Protein SpsA, Chain A"/>
    <property type="match status" value="1"/>
</dbReference>
<dbReference type="HAMAP" id="MF_01631">
    <property type="entry name" value="GlmU"/>
    <property type="match status" value="1"/>
</dbReference>
<dbReference type="InterPro" id="IPR005882">
    <property type="entry name" value="Bifunctional_GlmU"/>
</dbReference>
<dbReference type="InterPro" id="IPR050065">
    <property type="entry name" value="GlmU-like"/>
</dbReference>
<dbReference type="InterPro" id="IPR038009">
    <property type="entry name" value="GlmU_C_LbH"/>
</dbReference>
<dbReference type="InterPro" id="IPR001451">
    <property type="entry name" value="Hexapep"/>
</dbReference>
<dbReference type="InterPro" id="IPR025877">
    <property type="entry name" value="MobA-like_NTP_Trfase"/>
</dbReference>
<dbReference type="InterPro" id="IPR029044">
    <property type="entry name" value="Nucleotide-diphossugar_trans"/>
</dbReference>
<dbReference type="InterPro" id="IPR011004">
    <property type="entry name" value="Trimer_LpxA-like_sf"/>
</dbReference>
<dbReference type="NCBIfam" id="TIGR01173">
    <property type="entry name" value="glmU"/>
    <property type="match status" value="1"/>
</dbReference>
<dbReference type="PANTHER" id="PTHR43584:SF3">
    <property type="entry name" value="BIFUNCTIONAL PROTEIN GLMU"/>
    <property type="match status" value="1"/>
</dbReference>
<dbReference type="PANTHER" id="PTHR43584">
    <property type="entry name" value="NUCLEOTIDYL TRANSFERASE"/>
    <property type="match status" value="1"/>
</dbReference>
<dbReference type="Pfam" id="PF00132">
    <property type="entry name" value="Hexapep"/>
    <property type="match status" value="1"/>
</dbReference>
<dbReference type="Pfam" id="PF12804">
    <property type="entry name" value="NTP_transf_3"/>
    <property type="match status" value="1"/>
</dbReference>
<dbReference type="SUPFAM" id="SSF53448">
    <property type="entry name" value="Nucleotide-diphospho-sugar transferases"/>
    <property type="match status" value="1"/>
</dbReference>
<dbReference type="SUPFAM" id="SSF51161">
    <property type="entry name" value="Trimeric LpxA-like enzymes"/>
    <property type="match status" value="1"/>
</dbReference>
<sequence>MLHKSVLGLVLAAGMGTRMRSNQSKALQMIGGKPMIAHLLASMQETNLLTHQAIVYGYRGEALQAALKADFPNVFWVKQEQQLGTGDAVKSATALIEQHDLTLIAFADIPLIRPHTLQQLLHSAAQHGFAILTAQMENPFGYGRIIHDETGGVCAIVEEKDANREQKNIREINVGVMAVKQEWLLTYLPRLENHNAQGEFYLSDLVELIARDGHFIESFCLESADEAMGANDRAQLAALEAVYRQRKVQELFAQGVTLIDPNRIDIHGTVIAGADVVIEPNVFLKGTVVIGDGVTIESGCCLKDCEIGRNTIIRSHSVIDTATIGAQADIGPFARIRPQTVIADGGKIGNFVEIKAAKIGQESKVNHLSYIGDAHIGAKVNVGAGTITCNYDGAAKHPTFIGDHVFIGSNTALVAPVTIKNGATIGAGSVITRDVAADTLALTRPKLTQIEHWRRPQKKKEHKNDA</sequence>
<gene>
    <name evidence="1" type="primary">glmU</name>
    <name type="ordered locus">DNO_1140</name>
</gene>
<accession>A5EXL2</accession>
<protein>
    <recommendedName>
        <fullName evidence="1">Bifunctional protein GlmU</fullName>
    </recommendedName>
    <domain>
        <recommendedName>
            <fullName evidence="1">UDP-N-acetylglucosamine pyrophosphorylase</fullName>
            <ecNumber evidence="1">2.7.7.23</ecNumber>
        </recommendedName>
        <alternativeName>
            <fullName evidence="1">N-acetylglucosamine-1-phosphate uridyltransferase</fullName>
        </alternativeName>
    </domain>
    <domain>
        <recommendedName>
            <fullName evidence="1">Glucosamine-1-phosphate N-acetyltransferase</fullName>
            <ecNumber evidence="1">2.3.1.157</ecNumber>
        </recommendedName>
    </domain>
</protein>
<organism>
    <name type="scientific">Dichelobacter nodosus (strain VCS1703A)</name>
    <dbReference type="NCBI Taxonomy" id="246195"/>
    <lineage>
        <taxon>Bacteria</taxon>
        <taxon>Pseudomonadati</taxon>
        <taxon>Pseudomonadota</taxon>
        <taxon>Gammaproteobacteria</taxon>
        <taxon>Cardiobacteriales</taxon>
        <taxon>Cardiobacteriaceae</taxon>
        <taxon>Dichelobacter</taxon>
    </lineage>
</organism>
<reference key="1">
    <citation type="journal article" date="2007" name="Nat. Biotechnol.">
        <title>Genome sequence and identification of candidate vaccine antigens from the animal pathogen Dichelobacter nodosus.</title>
        <authorList>
            <person name="Myers G.S.A."/>
            <person name="Parker D."/>
            <person name="Al-Hasani K."/>
            <person name="Kennan R.M."/>
            <person name="Seemann T."/>
            <person name="Ren Q."/>
            <person name="Badger J.H."/>
            <person name="Selengut J.D."/>
            <person name="Deboy R.T."/>
            <person name="Tettelin H."/>
            <person name="Boyce J.D."/>
            <person name="McCarl V.P."/>
            <person name="Han X."/>
            <person name="Nelson W.C."/>
            <person name="Madupu R."/>
            <person name="Mohamoud Y."/>
            <person name="Holley T."/>
            <person name="Fedorova N."/>
            <person name="Khouri H."/>
            <person name="Bottomley S.P."/>
            <person name="Whittington R.J."/>
            <person name="Adler B."/>
            <person name="Songer J.G."/>
            <person name="Rood J.I."/>
            <person name="Paulsen I.T."/>
        </authorList>
    </citation>
    <scope>NUCLEOTIDE SEQUENCE [LARGE SCALE GENOMIC DNA]</scope>
    <source>
        <strain>VCS1703A</strain>
    </source>
</reference>
<proteinExistence type="inferred from homology"/>